<sequence>MQDVRNINLVNNSSNSHDSSLANSKMPRNFKLLSDPQLVKCGTRLYRYDGLMPGDPSYPTITPRDPRNPLIRIRARAVEPLMLLIPRFVIDSDYVGQPPAVEVTIVNLNDNIDKQFLASMLDKCGTSDEINIYHHPITNKHLGIARIVFDSTKGARQFVEKYNQKSVMGKILDVFCDPFGATLKKSLESLTNSVAGKQLIGPKVTPQWTFQQAALEDTEFIHGYPEKNGEHIKDIYTTQTNHEIPNRSRDRNWNRDKERERDRHFKERSRHSSERSYDRDRGMRENVGTSIRRRRTFYRRRSSDISPEDSRDILIMTRERSRDSDSRPRDYCRSRERESFRDRKRSHEKGRDQPREKREHYYNSSKDREYRGRDRDRSAEIDQRDRGSLKYCSRYSLHEYIETDVRRSSNTISSYYSASSLPIASHGFNSCSFPSIENIKTWSDRRAWTAFQPDFHPVQPPPPPPEEIDNWDEEEHDKNSIVPTHYGCMAKLQPPVPSNVNFATKLQSVTQPNSDPGTVDLDTRIALIFKGKTFGNAPPFLQMDSSDSETDQGKPEVFSDVNSDSNNSENKKRSCEKNNKVLHQPNEASDISSDEELIGKKDKSKLSLICEKEVNDDNMSLSSLSSQEDPIQTKEGAEYKSIMSSYMYSHSNQNPFYYHASGYGHYLSGIPSESASRLFSNGAYVHSEYLKAVASFNFDSFSKPYDYNKGALSDQNDGIRQKVKQVIGYIVEELKQILKRDVNKRMIEITAFKHFETWWDEHTSKARSKPLFEKADSTVNTPLNCIKDTSYNEKNPDINLLINAHREVADFQSYSSIGLRAAMPKLPSFRRIRKHPSPIPTKRNFLERDLSDQEEMVQRSDSDKEDSNVEISDTARSKIKGPVPIQESDSKSHTSGLNSKRKGSASSFFSSSSSSTSSEAEYEAIDCVEKARTSEEDSPRGYGQRNLNQRTTTIRNRNLVGTMDVINVRNLCSGSNEFKKENVTKRTKKNIYSDTDEDNDRTLFPALKEKNISTILSDLEEISKDSCIGLDENGIEPTILRKIPNTPKLNEECRRSLTPVPPPGYNEEEIKKKVDCKQKPSFEYDRIYSDSEEEKEYQERRKRNTEYMAQMEREFLEEQEKRIEKSLDKNLQSPNNIVKNNNSPRNKNDETRKTAISQTRSCFESASKVDTTLVNIISVENDINEFGPHEEGDVLTNGCNKMYTNSKGKTKRTQSPVYSEGGSSQASQASQVALEHCYSLPPHSVSLGDYPSGKVNETKNILKREAENIAIVSQMTRTGPGRPRKDPICIQKKKRDLAPRMSNVKSKMTPNGDEWPDLAHKNVHFVPCDMYKTRDQNEEMVILYTFLTKGIDAEDINFIKMSYLDHLHKEPYAMFLNNTHWVDHCTTDRAFWPPPSKKRRKDDELIRHKTGCARTEGFYKLDVREKAKHKYHYAKANTEDSFNEDRSDEPTALTNHHHNKLISKMQGISREARSNQRRLLTAFGSMGESELLKFNQLKFRKKQLKFAKSAIHDWGLFAMEPIAADEMVIEYVGQMIRPVVADLRETKYEAIGIGSSYLFRIDMETIIDATKCGNLARFINHSCNPNCYAKVITIESEKKIVIYSKQPIGINEEITYDYKFPLEDEKIPCLCGAQGCRGTLN</sequence>
<dbReference type="EC" id="2.1.1.354" evidence="2"/>
<dbReference type="EMBL" id="AE014296">
    <property type="protein sequence ID" value="EAL24598.1"/>
    <property type="molecule type" value="Genomic_DNA"/>
</dbReference>
<dbReference type="EMBL" id="AE014296">
    <property type="protein sequence ID" value="EAL24599.1"/>
    <property type="molecule type" value="Genomic_DNA"/>
</dbReference>
<dbReference type="EMBL" id="AE014296">
    <property type="protein sequence ID" value="EDP28071.1"/>
    <property type="molecule type" value="Genomic_DNA"/>
</dbReference>
<dbReference type="EMBL" id="AE014296">
    <property type="protein sequence ID" value="EFA98694.1"/>
    <property type="molecule type" value="Genomic_DNA"/>
</dbReference>
<dbReference type="EMBL" id="AE014296">
    <property type="protein sequence ID" value="EFA98695.1"/>
    <property type="molecule type" value="Genomic_DNA"/>
</dbReference>
<dbReference type="EMBL" id="AE014296">
    <property type="protein sequence ID" value="EFA98696.1"/>
    <property type="molecule type" value="Genomic_DNA"/>
</dbReference>
<dbReference type="EMBL" id="AE014296">
    <property type="protein sequence ID" value="EFA98697.1"/>
    <property type="molecule type" value="Genomic_DNA"/>
</dbReference>
<dbReference type="EMBL" id="AE014296">
    <property type="protein sequence ID" value="EFA98698.1"/>
    <property type="molecule type" value="Genomic_DNA"/>
</dbReference>
<dbReference type="EMBL" id="AE014296">
    <property type="protein sequence ID" value="EFA98699.1"/>
    <property type="molecule type" value="Genomic_DNA"/>
</dbReference>
<dbReference type="EMBL" id="AY084175">
    <property type="protein sequence ID" value="AAL89913.1"/>
    <property type="status" value="ALT_SEQ"/>
    <property type="molecule type" value="mRNA"/>
</dbReference>
<dbReference type="EMBL" id="BT022150">
    <property type="protein sequence ID" value="AAY51545.1"/>
    <property type="status" value="ALT_SEQ"/>
    <property type="molecule type" value="mRNA"/>
</dbReference>
<dbReference type="EMBL" id="BT150052">
    <property type="protein sequence ID" value="AGJ89714.1"/>
    <property type="molecule type" value="mRNA"/>
</dbReference>
<dbReference type="RefSeq" id="NP_001015221.1">
    <property type="nucleotide sequence ID" value="NM_001015221.3"/>
</dbReference>
<dbReference type="RefSeq" id="NP_001015222.1">
    <property type="nucleotide sequence ID" value="NM_001015222.3"/>
</dbReference>
<dbReference type="RefSeq" id="NP_001104406.1">
    <property type="nucleotide sequence ID" value="NM_001110936.3"/>
</dbReference>
<dbReference type="RefSeq" id="NP_001163846.1">
    <property type="nucleotide sequence ID" value="NM_001170375.2"/>
</dbReference>
<dbReference type="RefSeq" id="NP_001163847.1">
    <property type="nucleotide sequence ID" value="NM_001170376.2"/>
</dbReference>
<dbReference type="RefSeq" id="NP_001163848.1">
    <property type="nucleotide sequence ID" value="NM_001170377.1"/>
</dbReference>
<dbReference type="RefSeq" id="NP_001163849.1">
    <property type="nucleotide sequence ID" value="NM_001170378.1"/>
</dbReference>
<dbReference type="RefSeq" id="NP_001163850.1">
    <property type="nucleotide sequence ID" value="NM_001170379.1"/>
</dbReference>
<dbReference type="RefSeq" id="NP_001163851.1">
    <property type="nucleotide sequence ID" value="NM_001170380.2"/>
</dbReference>
<dbReference type="SMR" id="Q5LJZ2"/>
<dbReference type="BioGRID" id="78096">
    <property type="interactions" value="9"/>
</dbReference>
<dbReference type="ComplexPortal" id="CPX-2798">
    <property type="entry name" value="COMPASS complex"/>
</dbReference>
<dbReference type="FunCoup" id="Q5LJZ2">
    <property type="interactions" value="829"/>
</dbReference>
<dbReference type="IntAct" id="Q5LJZ2">
    <property type="interactions" value="28"/>
</dbReference>
<dbReference type="MINT" id="Q5LJZ2"/>
<dbReference type="STRING" id="7227.FBpp0112593"/>
<dbReference type="GlyGen" id="Q5LJZ2">
    <property type="glycosylation" value="1 site, 1 O-linked glycan (1 site)"/>
</dbReference>
<dbReference type="PaxDb" id="7227-FBpp0291454"/>
<dbReference type="EnsemblMetazoa" id="FBtr0113869">
    <property type="protein sequence ID" value="FBpp0112592"/>
    <property type="gene ID" value="FBgn0040022"/>
</dbReference>
<dbReference type="EnsemblMetazoa" id="FBtr0113870">
    <property type="protein sequence ID" value="FBpp0112593"/>
    <property type="gene ID" value="FBgn0040022"/>
</dbReference>
<dbReference type="EnsemblMetazoa" id="FBtr0113871">
    <property type="protein sequence ID" value="FBpp0112594"/>
    <property type="gene ID" value="FBgn0040022"/>
</dbReference>
<dbReference type="EnsemblMetazoa" id="FBtr0302243">
    <property type="protein sequence ID" value="FBpp0291452"/>
    <property type="gene ID" value="FBgn0040022"/>
</dbReference>
<dbReference type="EnsemblMetazoa" id="FBtr0302244">
    <property type="protein sequence ID" value="FBpp0291453"/>
    <property type="gene ID" value="FBgn0040022"/>
</dbReference>
<dbReference type="EnsemblMetazoa" id="FBtr0302245">
    <property type="protein sequence ID" value="FBpp0291454"/>
    <property type="gene ID" value="FBgn0040022"/>
</dbReference>
<dbReference type="EnsemblMetazoa" id="FBtr0302246">
    <property type="protein sequence ID" value="FBpp0291455"/>
    <property type="gene ID" value="FBgn0040022"/>
</dbReference>
<dbReference type="EnsemblMetazoa" id="FBtr0302247">
    <property type="protein sequence ID" value="FBpp0291456"/>
    <property type="gene ID" value="FBgn0040022"/>
</dbReference>
<dbReference type="EnsemblMetazoa" id="FBtr0302248">
    <property type="protein sequence ID" value="FBpp0291457"/>
    <property type="gene ID" value="FBgn0040022"/>
</dbReference>
<dbReference type="GeneID" id="3354971"/>
<dbReference type="KEGG" id="dme:Dmel_CG40351"/>
<dbReference type="UCSC" id="CG40351-RA">
    <property type="organism name" value="d. melanogaster"/>
</dbReference>
<dbReference type="AGR" id="FB:FBgn0040022"/>
<dbReference type="CTD" id="3354971"/>
<dbReference type="FlyBase" id="FBgn0040022">
    <property type="gene designation" value="Set1"/>
</dbReference>
<dbReference type="VEuPathDB" id="VectorBase:FBgn0040022"/>
<dbReference type="eggNOG" id="KOG1080">
    <property type="taxonomic scope" value="Eukaryota"/>
</dbReference>
<dbReference type="GeneTree" id="ENSGT00940000169211"/>
<dbReference type="HOGENOM" id="CLU_001226_3_0_1"/>
<dbReference type="InParanoid" id="Q5LJZ2"/>
<dbReference type="OMA" id="RMIEMTA"/>
<dbReference type="OrthoDB" id="308383at2759"/>
<dbReference type="PhylomeDB" id="Q5LJZ2"/>
<dbReference type="Reactome" id="R-DME-8936459">
    <property type="pathway name" value="RUNX1 regulates genes involved in megakaryocyte differentiation and platelet function"/>
</dbReference>
<dbReference type="Reactome" id="R-DME-9772755">
    <property type="pathway name" value="Formation of WDR5-containing histone-modifying complexes"/>
</dbReference>
<dbReference type="BioGRID-ORCS" id="3354971">
    <property type="hits" value="0 hits in 3 CRISPR screens"/>
</dbReference>
<dbReference type="GenomeRNAi" id="3354971"/>
<dbReference type="PRO" id="PR:Q5LJZ2"/>
<dbReference type="Proteomes" id="UP000000803">
    <property type="component" value="Chromosome 3L"/>
</dbReference>
<dbReference type="Bgee" id="FBgn0040022">
    <property type="expression patterns" value="Expressed in adult Malpighian tubule bar-shaped cell of initial segment in Malpighian tubule and 279 other cell types or tissues"/>
</dbReference>
<dbReference type="GO" id="GO:0000791">
    <property type="term" value="C:euchromatin"/>
    <property type="evidence" value="ECO:0000314"/>
    <property type="project" value="FlyBase"/>
</dbReference>
<dbReference type="GO" id="GO:0005700">
    <property type="term" value="C:polytene chromosome"/>
    <property type="evidence" value="ECO:0000314"/>
    <property type="project" value="FlyBase"/>
</dbReference>
<dbReference type="GO" id="GO:0048188">
    <property type="term" value="C:Set1C/COMPASS complex"/>
    <property type="evidence" value="ECO:0000314"/>
    <property type="project" value="FlyBase"/>
</dbReference>
<dbReference type="GO" id="GO:0042800">
    <property type="term" value="F:histone H3K4 methyltransferase activity"/>
    <property type="evidence" value="ECO:0000315"/>
    <property type="project" value="FlyBase"/>
</dbReference>
<dbReference type="GO" id="GO:0140999">
    <property type="term" value="F:histone H3K4 trimethyltransferase activity"/>
    <property type="evidence" value="ECO:0000314"/>
    <property type="project" value="FlyBase"/>
</dbReference>
<dbReference type="GO" id="GO:0003723">
    <property type="term" value="F:RNA binding"/>
    <property type="evidence" value="ECO:0000250"/>
    <property type="project" value="UniProtKB"/>
</dbReference>
<dbReference type="GO" id="GO:0032259">
    <property type="term" value="P:methylation"/>
    <property type="evidence" value="ECO:0007669"/>
    <property type="project" value="UniProtKB-KW"/>
</dbReference>
<dbReference type="CDD" id="cd12304">
    <property type="entry name" value="RRM_Set1"/>
    <property type="match status" value="1"/>
</dbReference>
<dbReference type="CDD" id="cd19169">
    <property type="entry name" value="SET_SETD1"/>
    <property type="match status" value="1"/>
</dbReference>
<dbReference type="FunFam" id="2.170.270.10:FF:000010">
    <property type="entry name" value="Histone-lysine N-methyltransferase"/>
    <property type="match status" value="1"/>
</dbReference>
<dbReference type="FunFam" id="3.30.70.330:FF:000178">
    <property type="entry name" value="Histone-lysine N-methyltransferase"/>
    <property type="match status" value="1"/>
</dbReference>
<dbReference type="Gene3D" id="3.30.70.330">
    <property type="match status" value="1"/>
</dbReference>
<dbReference type="Gene3D" id="2.170.270.10">
    <property type="entry name" value="SET domain"/>
    <property type="match status" value="1"/>
</dbReference>
<dbReference type="InterPro" id="IPR024657">
    <property type="entry name" value="COMPASS_Set1_N-SET"/>
</dbReference>
<dbReference type="InterPro" id="IPR012677">
    <property type="entry name" value="Nucleotide-bd_a/b_plait_sf"/>
</dbReference>
<dbReference type="InterPro" id="IPR003616">
    <property type="entry name" value="Post-SET_dom"/>
</dbReference>
<dbReference type="InterPro" id="IPR035979">
    <property type="entry name" value="RBD_domain_sf"/>
</dbReference>
<dbReference type="InterPro" id="IPR000504">
    <property type="entry name" value="RRM_dom"/>
</dbReference>
<dbReference type="InterPro" id="IPR044570">
    <property type="entry name" value="Set1-like"/>
</dbReference>
<dbReference type="InterPro" id="IPR001214">
    <property type="entry name" value="SET_dom"/>
</dbReference>
<dbReference type="InterPro" id="IPR046341">
    <property type="entry name" value="SET_dom_sf"/>
</dbReference>
<dbReference type="InterPro" id="IPR037841">
    <property type="entry name" value="SET_SETD1A/B"/>
</dbReference>
<dbReference type="PANTHER" id="PTHR45814">
    <property type="entry name" value="HISTONE-LYSINE N-METHYLTRANSFERASE SETD1"/>
    <property type="match status" value="1"/>
</dbReference>
<dbReference type="PANTHER" id="PTHR45814:SF2">
    <property type="entry name" value="HISTONE-LYSINE N-METHYLTRANSFERASE SETD1"/>
    <property type="match status" value="1"/>
</dbReference>
<dbReference type="Pfam" id="PF11764">
    <property type="entry name" value="N-SET"/>
    <property type="match status" value="1"/>
</dbReference>
<dbReference type="Pfam" id="PF00076">
    <property type="entry name" value="RRM_1"/>
    <property type="match status" value="1"/>
</dbReference>
<dbReference type="Pfam" id="PF00856">
    <property type="entry name" value="SET"/>
    <property type="match status" value="1"/>
</dbReference>
<dbReference type="SMART" id="SM01291">
    <property type="entry name" value="N-SET"/>
    <property type="match status" value="1"/>
</dbReference>
<dbReference type="SMART" id="SM00508">
    <property type="entry name" value="PostSET"/>
    <property type="match status" value="1"/>
</dbReference>
<dbReference type="SMART" id="SM00360">
    <property type="entry name" value="RRM"/>
    <property type="match status" value="1"/>
</dbReference>
<dbReference type="SMART" id="SM00317">
    <property type="entry name" value="SET"/>
    <property type="match status" value="1"/>
</dbReference>
<dbReference type="SUPFAM" id="SSF54928">
    <property type="entry name" value="RNA-binding domain, RBD"/>
    <property type="match status" value="1"/>
</dbReference>
<dbReference type="SUPFAM" id="SSF82199">
    <property type="entry name" value="SET domain"/>
    <property type="match status" value="1"/>
</dbReference>
<dbReference type="PROSITE" id="PS50868">
    <property type="entry name" value="POST_SET"/>
    <property type="match status" value="1"/>
</dbReference>
<dbReference type="PROSITE" id="PS50102">
    <property type="entry name" value="RRM"/>
    <property type="match status" value="1"/>
</dbReference>
<dbReference type="PROSITE" id="PS50280">
    <property type="entry name" value="SET"/>
    <property type="match status" value="1"/>
</dbReference>
<organism>
    <name type="scientific">Drosophila melanogaster</name>
    <name type="common">Fruit fly</name>
    <dbReference type="NCBI Taxonomy" id="7227"/>
    <lineage>
        <taxon>Eukaryota</taxon>
        <taxon>Metazoa</taxon>
        <taxon>Ecdysozoa</taxon>
        <taxon>Arthropoda</taxon>
        <taxon>Hexapoda</taxon>
        <taxon>Insecta</taxon>
        <taxon>Pterygota</taxon>
        <taxon>Neoptera</taxon>
        <taxon>Endopterygota</taxon>
        <taxon>Diptera</taxon>
        <taxon>Brachycera</taxon>
        <taxon>Muscomorpha</taxon>
        <taxon>Ephydroidea</taxon>
        <taxon>Drosophilidae</taxon>
        <taxon>Drosophila</taxon>
        <taxon>Sophophora</taxon>
    </lineage>
</organism>
<keyword id="KW-0010">Activator</keyword>
<keyword id="KW-0156">Chromatin regulator</keyword>
<keyword id="KW-0158">Chromosome</keyword>
<keyword id="KW-0175">Coiled coil</keyword>
<keyword id="KW-0489">Methyltransferase</keyword>
<keyword id="KW-0539">Nucleus</keyword>
<keyword id="KW-1185">Reference proteome</keyword>
<keyword id="KW-0694">RNA-binding</keyword>
<keyword id="KW-0949">S-adenosyl-L-methionine</keyword>
<keyword id="KW-0804">Transcription</keyword>
<keyword id="KW-0805">Transcription regulation</keyword>
<keyword id="KW-0808">Transferase</keyword>
<feature type="chain" id="PRO_0000429378" description="Histone-lysine N-methyltransferase SETD1">
    <location>
        <begin position="1"/>
        <end position="1641"/>
    </location>
</feature>
<feature type="domain" description="RRM" evidence="5">
    <location>
        <begin position="101"/>
        <end position="179"/>
    </location>
</feature>
<feature type="domain" description="SET" evidence="6">
    <location>
        <begin position="1502"/>
        <end position="1619"/>
    </location>
</feature>
<feature type="domain" description="Post-SET" evidence="4">
    <location>
        <begin position="1625"/>
        <end position="1641"/>
    </location>
</feature>
<feature type="region of interest" description="Disordered" evidence="7">
    <location>
        <begin position="1"/>
        <end position="23"/>
    </location>
</feature>
<feature type="region of interest" description="Disordered" evidence="7">
    <location>
        <begin position="236"/>
        <end position="384"/>
    </location>
</feature>
<feature type="region of interest" description="Disordered" evidence="7">
    <location>
        <begin position="537"/>
        <end position="596"/>
    </location>
</feature>
<feature type="region of interest" description="Disordered" evidence="7">
    <location>
        <begin position="831"/>
        <end position="915"/>
    </location>
</feature>
<feature type="region of interest" description="Disordered" evidence="7">
    <location>
        <begin position="930"/>
        <end position="949"/>
    </location>
</feature>
<feature type="region of interest" description="Disordered" evidence="7">
    <location>
        <begin position="1119"/>
        <end position="1155"/>
    </location>
</feature>
<feature type="region of interest" description="Disordered" evidence="7">
    <location>
        <begin position="1205"/>
        <end position="1226"/>
    </location>
</feature>
<feature type="coiled-coil region" evidence="3">
    <location>
        <begin position="1091"/>
        <end position="1132"/>
    </location>
</feature>
<feature type="short sequence motif" description="RxxxRR motif" evidence="1">
    <location>
        <begin position="1473"/>
        <end position="1478"/>
    </location>
</feature>
<feature type="compositionally biased region" description="Low complexity" evidence="7">
    <location>
        <begin position="8"/>
        <end position="23"/>
    </location>
</feature>
<feature type="compositionally biased region" description="Basic and acidic residues" evidence="7">
    <location>
        <begin position="244"/>
        <end position="284"/>
    </location>
</feature>
<feature type="compositionally biased region" description="Basic residues" evidence="7">
    <location>
        <begin position="291"/>
        <end position="300"/>
    </location>
</feature>
<feature type="compositionally biased region" description="Basic and acidic residues" evidence="7">
    <location>
        <begin position="308"/>
        <end position="341"/>
    </location>
</feature>
<feature type="compositionally biased region" description="Basic and acidic residues" evidence="7">
    <location>
        <begin position="349"/>
        <end position="384"/>
    </location>
</feature>
<feature type="compositionally biased region" description="Low complexity" evidence="7">
    <location>
        <begin position="556"/>
        <end position="568"/>
    </location>
</feature>
<feature type="compositionally biased region" description="Basic and acidic residues" evidence="7">
    <location>
        <begin position="569"/>
        <end position="579"/>
    </location>
</feature>
<feature type="compositionally biased region" description="Basic and acidic residues" evidence="7">
    <location>
        <begin position="844"/>
        <end position="867"/>
    </location>
</feature>
<feature type="compositionally biased region" description="Low complexity" evidence="7">
    <location>
        <begin position="904"/>
        <end position="915"/>
    </location>
</feature>
<feature type="compositionally biased region" description="Basic and acidic residues" evidence="7">
    <location>
        <begin position="930"/>
        <end position="939"/>
    </location>
</feature>
<feature type="compositionally biased region" description="Basic and acidic residues" evidence="7">
    <location>
        <begin position="1119"/>
        <end position="1128"/>
    </location>
</feature>
<feature type="compositionally biased region" description="Polar residues" evidence="7">
    <location>
        <begin position="1129"/>
        <end position="1145"/>
    </location>
</feature>
<feature type="compositionally biased region" description="Polar residues" evidence="7">
    <location>
        <begin position="1205"/>
        <end position="1217"/>
    </location>
</feature>
<feature type="binding site" evidence="6">
    <location>
        <position position="1618"/>
    </location>
    <ligand>
        <name>S-adenosyl-L-methionine</name>
        <dbReference type="ChEBI" id="CHEBI:59789"/>
    </ligand>
</feature>
<feature type="mutagenesis site" description="In G5; predominantly lethal at the pupal stage with low levels of late L3 larval lethality." evidence="10">
    <original>E</original>
    <variation>K</variation>
    <location>
        <position position="1613"/>
    </location>
</feature>
<accession>Q5LJZ2</accession>
<accession>M9WDY6</accession>
<accession>Q4V706</accession>
<accession>Q8SXR9</accession>
<reference evidence="13" key="1">
    <citation type="journal article" date="2000" name="Science">
        <title>The genome sequence of Drosophila melanogaster.</title>
        <authorList>
            <person name="Adams M.D."/>
            <person name="Celniker S.E."/>
            <person name="Holt R.A."/>
            <person name="Evans C.A."/>
            <person name="Gocayne J.D."/>
            <person name="Amanatides P.G."/>
            <person name="Scherer S.E."/>
            <person name="Li P.W."/>
            <person name="Hoskins R.A."/>
            <person name="Galle R.F."/>
            <person name="George R.A."/>
            <person name="Lewis S.E."/>
            <person name="Richards S."/>
            <person name="Ashburner M."/>
            <person name="Henderson S.N."/>
            <person name="Sutton G.G."/>
            <person name="Wortman J.R."/>
            <person name="Yandell M.D."/>
            <person name="Zhang Q."/>
            <person name="Chen L.X."/>
            <person name="Brandon R.C."/>
            <person name="Rogers Y.-H.C."/>
            <person name="Blazej R.G."/>
            <person name="Champe M."/>
            <person name="Pfeiffer B.D."/>
            <person name="Wan K.H."/>
            <person name="Doyle C."/>
            <person name="Baxter E.G."/>
            <person name="Helt G."/>
            <person name="Nelson C.R."/>
            <person name="Miklos G.L.G."/>
            <person name="Abril J.F."/>
            <person name="Agbayani A."/>
            <person name="An H.-J."/>
            <person name="Andrews-Pfannkoch C."/>
            <person name="Baldwin D."/>
            <person name="Ballew R.M."/>
            <person name="Basu A."/>
            <person name="Baxendale J."/>
            <person name="Bayraktaroglu L."/>
            <person name="Beasley E.M."/>
            <person name="Beeson K.Y."/>
            <person name="Benos P.V."/>
            <person name="Berman B.P."/>
            <person name="Bhandari D."/>
            <person name="Bolshakov S."/>
            <person name="Borkova D."/>
            <person name="Botchan M.R."/>
            <person name="Bouck J."/>
            <person name="Brokstein P."/>
            <person name="Brottier P."/>
            <person name="Burtis K.C."/>
            <person name="Busam D.A."/>
            <person name="Butler H."/>
            <person name="Cadieu E."/>
            <person name="Center A."/>
            <person name="Chandra I."/>
            <person name="Cherry J.M."/>
            <person name="Cawley S."/>
            <person name="Dahlke C."/>
            <person name="Davenport L.B."/>
            <person name="Davies P."/>
            <person name="de Pablos B."/>
            <person name="Delcher A."/>
            <person name="Deng Z."/>
            <person name="Mays A.D."/>
            <person name="Dew I."/>
            <person name="Dietz S.M."/>
            <person name="Dodson K."/>
            <person name="Doup L.E."/>
            <person name="Downes M."/>
            <person name="Dugan-Rocha S."/>
            <person name="Dunkov B.C."/>
            <person name="Dunn P."/>
            <person name="Durbin K.J."/>
            <person name="Evangelista C.C."/>
            <person name="Ferraz C."/>
            <person name="Ferriera S."/>
            <person name="Fleischmann W."/>
            <person name="Fosler C."/>
            <person name="Gabrielian A.E."/>
            <person name="Garg N.S."/>
            <person name="Gelbart W.M."/>
            <person name="Glasser K."/>
            <person name="Glodek A."/>
            <person name="Gong F."/>
            <person name="Gorrell J.H."/>
            <person name="Gu Z."/>
            <person name="Guan P."/>
            <person name="Harris M."/>
            <person name="Harris N.L."/>
            <person name="Harvey D.A."/>
            <person name="Heiman T.J."/>
            <person name="Hernandez J.R."/>
            <person name="Houck J."/>
            <person name="Hostin D."/>
            <person name="Houston K.A."/>
            <person name="Howland T.J."/>
            <person name="Wei M.-H."/>
            <person name="Ibegwam C."/>
            <person name="Jalali M."/>
            <person name="Kalush F."/>
            <person name="Karpen G.H."/>
            <person name="Ke Z."/>
            <person name="Kennison J.A."/>
            <person name="Ketchum K.A."/>
            <person name="Kimmel B.E."/>
            <person name="Kodira C.D."/>
            <person name="Kraft C.L."/>
            <person name="Kravitz S."/>
            <person name="Kulp D."/>
            <person name="Lai Z."/>
            <person name="Lasko P."/>
            <person name="Lei Y."/>
            <person name="Levitsky A.A."/>
            <person name="Li J.H."/>
            <person name="Li Z."/>
            <person name="Liang Y."/>
            <person name="Lin X."/>
            <person name="Liu X."/>
            <person name="Mattei B."/>
            <person name="McIntosh T.C."/>
            <person name="McLeod M.P."/>
            <person name="McPherson D."/>
            <person name="Merkulov G."/>
            <person name="Milshina N.V."/>
            <person name="Mobarry C."/>
            <person name="Morris J."/>
            <person name="Moshrefi A."/>
            <person name="Mount S.M."/>
            <person name="Moy M."/>
            <person name="Murphy B."/>
            <person name="Murphy L."/>
            <person name="Muzny D.M."/>
            <person name="Nelson D.L."/>
            <person name="Nelson D.R."/>
            <person name="Nelson K.A."/>
            <person name="Nixon K."/>
            <person name="Nusskern D.R."/>
            <person name="Pacleb J.M."/>
            <person name="Palazzolo M."/>
            <person name="Pittman G.S."/>
            <person name="Pan S."/>
            <person name="Pollard J."/>
            <person name="Puri V."/>
            <person name="Reese M.G."/>
            <person name="Reinert K."/>
            <person name="Remington K."/>
            <person name="Saunders R.D.C."/>
            <person name="Scheeler F."/>
            <person name="Shen H."/>
            <person name="Shue B.C."/>
            <person name="Siden-Kiamos I."/>
            <person name="Simpson M."/>
            <person name="Skupski M.P."/>
            <person name="Smith T.J."/>
            <person name="Spier E."/>
            <person name="Spradling A.C."/>
            <person name="Stapleton M."/>
            <person name="Strong R."/>
            <person name="Sun E."/>
            <person name="Svirskas R."/>
            <person name="Tector C."/>
            <person name="Turner R."/>
            <person name="Venter E."/>
            <person name="Wang A.H."/>
            <person name="Wang X."/>
            <person name="Wang Z.-Y."/>
            <person name="Wassarman D.A."/>
            <person name="Weinstock G.M."/>
            <person name="Weissenbach J."/>
            <person name="Williams S.M."/>
            <person name="Woodage T."/>
            <person name="Worley K.C."/>
            <person name="Wu D."/>
            <person name="Yang S."/>
            <person name="Yao Q.A."/>
            <person name="Ye J."/>
            <person name="Yeh R.-F."/>
            <person name="Zaveri J.S."/>
            <person name="Zhan M."/>
            <person name="Zhang G."/>
            <person name="Zhao Q."/>
            <person name="Zheng L."/>
            <person name="Zheng X.H."/>
            <person name="Zhong F.N."/>
            <person name="Zhong W."/>
            <person name="Zhou X."/>
            <person name="Zhu S.C."/>
            <person name="Zhu X."/>
            <person name="Smith H.O."/>
            <person name="Gibbs R.A."/>
            <person name="Myers E.W."/>
            <person name="Rubin G.M."/>
            <person name="Venter J.C."/>
        </authorList>
    </citation>
    <scope>NUCLEOTIDE SEQUENCE [LARGE SCALE GENOMIC DNA]</scope>
    <source>
        <strain>Berkeley</strain>
    </source>
</reference>
<reference evidence="13" key="2">
    <citation type="journal article" date="2002" name="Genome Biol.">
        <title>Annotation of the Drosophila melanogaster euchromatic genome: a systematic review.</title>
        <authorList>
            <person name="Misra S."/>
            <person name="Crosby M.A."/>
            <person name="Mungall C.J."/>
            <person name="Matthews B.B."/>
            <person name="Campbell K.S."/>
            <person name="Hradecky P."/>
            <person name="Huang Y."/>
            <person name="Kaminker J.S."/>
            <person name="Millburn G.H."/>
            <person name="Prochnik S.E."/>
            <person name="Smith C.D."/>
            <person name="Tupy J.L."/>
            <person name="Whitfield E.J."/>
            <person name="Bayraktaroglu L."/>
            <person name="Berman B.P."/>
            <person name="Bettencourt B.R."/>
            <person name="Celniker S.E."/>
            <person name="de Grey A.D.N.J."/>
            <person name="Drysdale R.A."/>
            <person name="Harris N.L."/>
            <person name="Richter J."/>
            <person name="Russo S."/>
            <person name="Schroeder A.J."/>
            <person name="Shu S.Q."/>
            <person name="Stapleton M."/>
            <person name="Yamada C."/>
            <person name="Ashburner M."/>
            <person name="Gelbart W.M."/>
            <person name="Rubin G.M."/>
            <person name="Lewis S.E."/>
        </authorList>
    </citation>
    <scope>GENOME REANNOTATION</scope>
    <source>
        <strain>Berkeley</strain>
    </source>
</reference>
<reference evidence="12" key="3">
    <citation type="submission" date="2013-04" db="EMBL/GenBank/DDBJ databases">
        <authorList>
            <person name="Stapleton M."/>
            <person name="Booth B."/>
            <person name="Brokstein P."/>
            <person name="Hong L."/>
            <person name="Agbayani A."/>
            <person name="Carlson J."/>
            <person name="Champe M."/>
            <person name="Chavez C."/>
            <person name="Dorsett V."/>
            <person name="Dresnek D."/>
            <person name="Farfan D."/>
            <person name="Frise E."/>
            <person name="George R."/>
            <person name="Gonzalez M."/>
            <person name="Guarin H."/>
            <person name="Kronmiller B."/>
            <person name="Li P."/>
            <person name="Liao G."/>
            <person name="Miranda A."/>
            <person name="Mungall C.J."/>
            <person name="Nunoo J."/>
            <person name="Pacleb J."/>
            <person name="Paragas V."/>
            <person name="Park S."/>
            <person name="Patel S."/>
            <person name="Phouanenavong S."/>
            <person name="Wan K."/>
            <person name="Yu C."/>
            <person name="Lewis S.E."/>
            <person name="Rubin G.M."/>
            <person name="Celniker S."/>
        </authorList>
    </citation>
    <scope>NUCLEOTIDE SEQUENCE [LARGE SCALE MRNA]</scope>
    <source>
        <strain>Berkeley</strain>
        <tissue>Embryo</tissue>
    </source>
</reference>
<reference evidence="11" key="4">
    <citation type="journal article" date="2011" name="EMBO J.">
        <title>Drosophila Set1 is the major histone H3 lysine 4 trimethyltransferase with role in transcription.</title>
        <authorList>
            <person name="Ardehali M.B."/>
            <person name="Mei A."/>
            <person name="Zobeck K.L."/>
            <person name="Caron M."/>
            <person name="Lis J.T."/>
            <person name="Kusch T."/>
        </authorList>
    </citation>
    <scope>FUNCTION</scope>
    <scope>IDENTIFICATION IN THE SET1C/COMPASS COMPLEX</scope>
    <scope>SUBCELLULAR LOCATION</scope>
</reference>
<reference evidence="11" key="5">
    <citation type="journal article" date="2011" name="Mol. Cell. Biol.">
        <title>The COMPASS family of H3K4 methylases in Drosophila.</title>
        <authorList>
            <person name="Mohan M."/>
            <person name="Herz H.M."/>
            <person name="Smith E.R."/>
            <person name="Zhang Y."/>
            <person name="Jackson J."/>
            <person name="Washburn M.P."/>
            <person name="Florens L."/>
            <person name="Eissenberg J.C."/>
            <person name="Shilatifard A."/>
        </authorList>
    </citation>
    <scope>FUNCTION</scope>
    <scope>IDENTIFICATION IN THE SET1C/COMPASS COMPLEX</scope>
    <scope>SUBCELLULAR LOCATION</scope>
</reference>
<reference evidence="11" key="6">
    <citation type="journal article" date="2012" name="Genetics">
        <title>dSet1 is the main H3K4 di- and tri-methyltransferase throughout Drosophila development.</title>
        <authorList>
            <person name="Hallson G."/>
            <person name="Hollebakken R.E."/>
            <person name="Li T."/>
            <person name="Syrzycka M."/>
            <person name="Kim I."/>
            <person name="Cotsworth S."/>
            <person name="Fitzpatrick K.A."/>
            <person name="Sinclair D.A."/>
            <person name="Honda B.M."/>
        </authorList>
    </citation>
    <scope>FUNCTION</scope>
    <scope>INTERACTION WITH ASH2 AND WDS</scope>
    <scope>MUTAGENESIS OF GLU-1613</scope>
</reference>
<comment type="function">
    <text evidence="1 8 9 10">Catalytic component of the COMPASS (Set1C) complex that specifically mono-, di- and trimethylates histone H3 to form H3K4me1/2/3 (PubMed:21694722, PubMed:21875999, PubMed:22048023). Binds RNAs which might negatively affect its histone methyltransferase activity (By similarity). COMPASS recognizes ubiquitinated H2B on one face of the nucleosome which stimulates the methylation of H3 on the opposing face (By similarity). Set1-dependent trimethylation regulates chromatin changes at active promoters that ensure optimal RNA polymerase II release into productive elongation, thereby contributing to optimal transcription (PubMed:21694722).</text>
</comment>
<comment type="catalytic activity">
    <reaction evidence="1">
        <text>L-lysyl(4)-[histone H3] + 3 S-adenosyl-L-methionine = N(6),N(6),N(6)-trimethyl-L-lysyl(4)-[histone H3] + 3 S-adenosyl-L-homocysteine + 3 H(+)</text>
        <dbReference type="Rhea" id="RHEA:60260"/>
        <dbReference type="Rhea" id="RHEA-COMP:15537"/>
        <dbReference type="Rhea" id="RHEA-COMP:15547"/>
        <dbReference type="ChEBI" id="CHEBI:15378"/>
        <dbReference type="ChEBI" id="CHEBI:29969"/>
        <dbReference type="ChEBI" id="CHEBI:57856"/>
        <dbReference type="ChEBI" id="CHEBI:59789"/>
        <dbReference type="ChEBI" id="CHEBI:61961"/>
        <dbReference type="EC" id="2.1.1.354"/>
    </reaction>
</comment>
<comment type="catalytic activity">
    <reaction evidence="1">
        <text>N(6)-methyl-L-lysyl(4)-[histone H3] + S-adenosyl-L-methionine = N(6),N(6)-dimethyl-L-lysyl(4)-[histone H3] + S-adenosyl-L-homocysteine + H(+)</text>
        <dbReference type="Rhea" id="RHEA:60268"/>
        <dbReference type="Rhea" id="RHEA-COMP:15540"/>
        <dbReference type="Rhea" id="RHEA-COMP:15543"/>
        <dbReference type="ChEBI" id="CHEBI:15378"/>
        <dbReference type="ChEBI" id="CHEBI:57856"/>
        <dbReference type="ChEBI" id="CHEBI:59789"/>
        <dbReference type="ChEBI" id="CHEBI:61929"/>
        <dbReference type="ChEBI" id="CHEBI:61976"/>
    </reaction>
</comment>
<comment type="catalytic activity">
    <reaction evidence="1">
        <text>N(6),N(6)-dimethyl-L-lysyl(4)-[histone H3] + S-adenosyl-L-methionine = N(6),N(6),N(6)-trimethyl-L-lysyl(4)-[histone H3] + S-adenosyl-L-homocysteine + H(+)</text>
        <dbReference type="Rhea" id="RHEA:60272"/>
        <dbReference type="Rhea" id="RHEA-COMP:15537"/>
        <dbReference type="Rhea" id="RHEA-COMP:15540"/>
        <dbReference type="ChEBI" id="CHEBI:15378"/>
        <dbReference type="ChEBI" id="CHEBI:57856"/>
        <dbReference type="ChEBI" id="CHEBI:59789"/>
        <dbReference type="ChEBI" id="CHEBI:61961"/>
        <dbReference type="ChEBI" id="CHEBI:61976"/>
    </reaction>
</comment>
<comment type="subunit">
    <text evidence="8 9 10">Component of the Set1C/COMPASS complex, composed at least of the catalytic subunit Set1, wds/WDR5, Wdr82, Rbbp5, ash2, Cfp1/CXXC1, hcf and Dpy-30L1 (PubMed:21694722, PubMed:21875999, PubMed:22048023).</text>
</comment>
<comment type="interaction">
    <interactant intactId="EBI-3405171">
        <id>Q5LJZ2</id>
    </interactant>
    <interactant intactId="EBI-2912878">
        <id>Q9V4C8</id>
        <label>Hcf</label>
    </interactant>
    <organismsDiffer>false</organismsDiffer>
    <experiments>3</experiments>
</comment>
<comment type="subcellular location">
    <subcellularLocation>
        <location evidence="8 9">Nucleus</location>
    </subcellularLocation>
    <subcellularLocation>
        <location evidence="8 9">Chromosome</location>
    </subcellularLocation>
    <text evidence="8 9">Colocalizes with di- and trimethylated H3 'Lys-4' and with phosphorylated RNA polymerase II at transcriptional puffs on polytene chromosomes.</text>
</comment>
<comment type="similarity">
    <text evidence="6">Belongs to the class V-like SAM-binding methyltransferase superfamily.</text>
</comment>
<comment type="sequence caution" evidence="11">
    <conflict type="frameshift">
        <sequence resource="EMBL-CDS" id="AAL89913"/>
    </conflict>
</comment>
<comment type="sequence caution" evidence="11">
    <conflict type="miscellaneous discrepancy">
        <sequence resource="EMBL-CDS" id="AAL89913"/>
    </conflict>
    <text>Contaminating sequence. Potential poly-A sequence.</text>
</comment>
<comment type="sequence caution" evidence="11">
    <conflict type="miscellaneous discrepancy">
        <sequence resource="EMBL-CDS" id="AAY51545"/>
    </conflict>
    <text>Contaminating sequence. Potential poly-A sequence.</text>
</comment>
<evidence type="ECO:0000250" key="1">
    <source>
        <dbReference type="UniProtKB" id="P38827"/>
    </source>
</evidence>
<evidence type="ECO:0000250" key="2">
    <source>
        <dbReference type="UniProtKB" id="Q9UPS6"/>
    </source>
</evidence>
<evidence type="ECO:0000255" key="3"/>
<evidence type="ECO:0000255" key="4">
    <source>
        <dbReference type="PROSITE-ProRule" id="PRU00155"/>
    </source>
</evidence>
<evidence type="ECO:0000255" key="5">
    <source>
        <dbReference type="PROSITE-ProRule" id="PRU00176"/>
    </source>
</evidence>
<evidence type="ECO:0000255" key="6">
    <source>
        <dbReference type="PROSITE-ProRule" id="PRU00190"/>
    </source>
</evidence>
<evidence type="ECO:0000256" key="7">
    <source>
        <dbReference type="SAM" id="MobiDB-lite"/>
    </source>
</evidence>
<evidence type="ECO:0000269" key="8">
    <source>
    </source>
</evidence>
<evidence type="ECO:0000269" key="9">
    <source>
    </source>
</evidence>
<evidence type="ECO:0000269" key="10">
    <source>
    </source>
</evidence>
<evidence type="ECO:0000305" key="11"/>
<evidence type="ECO:0000312" key="12">
    <source>
        <dbReference type="EMBL" id="AAY51545.1"/>
    </source>
</evidence>
<evidence type="ECO:0000312" key="13">
    <source>
        <dbReference type="EMBL" id="EAL24598.1"/>
    </source>
</evidence>
<evidence type="ECO:0000312" key="14">
    <source>
        <dbReference type="FlyBase" id="FBgn0040022"/>
    </source>
</evidence>
<gene>
    <name evidence="13 14" type="primary">Set1</name>
    <name type="ORF">CG40351</name>
</gene>
<name>SET1_DROME</name>
<proteinExistence type="evidence at protein level"/>
<protein>
    <recommendedName>
        <fullName evidence="2">Histone-lysine N-methyltransferase SETD1</fullName>
        <ecNumber evidence="2">2.1.1.354</ecNumber>
    </recommendedName>
</protein>